<comment type="function">
    <text evidence="1">Participates actively in the response to hyperosmotic and heat shock by preventing the aggregation of stress-denatured proteins, in association with DnaK and GrpE. It is the nucleotide exchange factor for DnaK and may function as a thermosensor. Unfolded proteins bind initially to DnaJ; upon interaction with the DnaJ-bound protein, DnaK hydrolyzes its bound ATP, resulting in the formation of a stable complex. GrpE releases ADP from DnaK; ATP binding to DnaK triggers the release of the substrate protein, thus completing the reaction cycle. Several rounds of ATP-dependent interactions between DnaJ, DnaK and GrpE are required for fully efficient folding.</text>
</comment>
<comment type="subunit">
    <text evidence="1">Homodimer.</text>
</comment>
<comment type="subcellular location">
    <subcellularLocation>
        <location evidence="1">Cytoplasm</location>
    </subcellularLocation>
</comment>
<comment type="similarity">
    <text evidence="1">Belongs to the GrpE family.</text>
</comment>
<reference key="1">
    <citation type="journal article" date="2005" name="PLoS Biol.">
        <title>The genome sequence of Rickettsia felis identifies the first putative conjugative plasmid in an obligate intracellular parasite.</title>
        <authorList>
            <person name="Ogata H."/>
            <person name="Renesto P."/>
            <person name="Audic S."/>
            <person name="Robert C."/>
            <person name="Blanc G."/>
            <person name="Fournier P.-E."/>
            <person name="Parinello H."/>
            <person name="Claverie J.-M."/>
            <person name="Raoult D."/>
        </authorList>
    </citation>
    <scope>NUCLEOTIDE SEQUENCE [LARGE SCALE GENOMIC DNA]</scope>
    <source>
        <strain>ATCC VR-1525 / URRWXCal2</strain>
    </source>
</reference>
<feature type="chain" id="PRO_0000277922" description="Protein GrpE">
    <location>
        <begin position="1"/>
        <end position="179"/>
    </location>
</feature>
<protein>
    <recommendedName>
        <fullName evidence="1">Protein GrpE</fullName>
    </recommendedName>
    <alternativeName>
        <fullName evidence="1">HSP-70 cofactor</fullName>
    </alternativeName>
</protein>
<dbReference type="EMBL" id="CP000053">
    <property type="protein sequence ID" value="AAY61253.1"/>
    <property type="molecule type" value="Genomic_DNA"/>
</dbReference>
<dbReference type="SMR" id="Q4UJN5"/>
<dbReference type="STRING" id="315456.RF_0402"/>
<dbReference type="KEGG" id="rfe:RF_0402"/>
<dbReference type="eggNOG" id="COG0576">
    <property type="taxonomic scope" value="Bacteria"/>
</dbReference>
<dbReference type="HOGENOM" id="CLU_057217_6_2_5"/>
<dbReference type="OrthoDB" id="9789811at2"/>
<dbReference type="Proteomes" id="UP000008548">
    <property type="component" value="Chromosome"/>
</dbReference>
<dbReference type="GO" id="GO:0005737">
    <property type="term" value="C:cytoplasm"/>
    <property type="evidence" value="ECO:0007669"/>
    <property type="project" value="UniProtKB-SubCell"/>
</dbReference>
<dbReference type="GO" id="GO:0000774">
    <property type="term" value="F:adenyl-nucleotide exchange factor activity"/>
    <property type="evidence" value="ECO:0007669"/>
    <property type="project" value="InterPro"/>
</dbReference>
<dbReference type="GO" id="GO:0042803">
    <property type="term" value="F:protein homodimerization activity"/>
    <property type="evidence" value="ECO:0007669"/>
    <property type="project" value="InterPro"/>
</dbReference>
<dbReference type="GO" id="GO:0051087">
    <property type="term" value="F:protein-folding chaperone binding"/>
    <property type="evidence" value="ECO:0007669"/>
    <property type="project" value="InterPro"/>
</dbReference>
<dbReference type="GO" id="GO:0051082">
    <property type="term" value="F:unfolded protein binding"/>
    <property type="evidence" value="ECO:0007669"/>
    <property type="project" value="TreeGrafter"/>
</dbReference>
<dbReference type="GO" id="GO:0006457">
    <property type="term" value="P:protein folding"/>
    <property type="evidence" value="ECO:0007669"/>
    <property type="project" value="InterPro"/>
</dbReference>
<dbReference type="GO" id="GO:0030150">
    <property type="term" value="P:protein import into mitochondrial matrix"/>
    <property type="evidence" value="ECO:0007669"/>
    <property type="project" value="TreeGrafter"/>
</dbReference>
<dbReference type="CDD" id="cd00446">
    <property type="entry name" value="GrpE"/>
    <property type="match status" value="1"/>
</dbReference>
<dbReference type="FunFam" id="2.30.22.10:FF:000001">
    <property type="entry name" value="Protein GrpE"/>
    <property type="match status" value="1"/>
</dbReference>
<dbReference type="Gene3D" id="3.90.20.20">
    <property type="match status" value="1"/>
</dbReference>
<dbReference type="Gene3D" id="2.30.22.10">
    <property type="entry name" value="Head domain of nucleotide exchange factor GrpE"/>
    <property type="match status" value="1"/>
</dbReference>
<dbReference type="HAMAP" id="MF_01151">
    <property type="entry name" value="GrpE"/>
    <property type="match status" value="1"/>
</dbReference>
<dbReference type="InterPro" id="IPR000740">
    <property type="entry name" value="GrpE"/>
</dbReference>
<dbReference type="InterPro" id="IPR013805">
    <property type="entry name" value="GrpE_coiled_coil"/>
</dbReference>
<dbReference type="InterPro" id="IPR009012">
    <property type="entry name" value="GrpE_head"/>
</dbReference>
<dbReference type="NCBIfam" id="NF010758">
    <property type="entry name" value="PRK14161.1"/>
    <property type="match status" value="1"/>
</dbReference>
<dbReference type="PANTHER" id="PTHR21237">
    <property type="entry name" value="GRPE PROTEIN"/>
    <property type="match status" value="1"/>
</dbReference>
<dbReference type="PANTHER" id="PTHR21237:SF23">
    <property type="entry name" value="GRPE PROTEIN HOMOLOG, MITOCHONDRIAL"/>
    <property type="match status" value="1"/>
</dbReference>
<dbReference type="Pfam" id="PF01025">
    <property type="entry name" value="GrpE"/>
    <property type="match status" value="1"/>
</dbReference>
<dbReference type="PRINTS" id="PR00773">
    <property type="entry name" value="GRPEPROTEIN"/>
</dbReference>
<dbReference type="SUPFAM" id="SSF58014">
    <property type="entry name" value="Coiled-coil domain of nucleotide exchange factor GrpE"/>
    <property type="match status" value="1"/>
</dbReference>
<dbReference type="SUPFAM" id="SSF51064">
    <property type="entry name" value="Head domain of nucleotide exchange factor GrpE"/>
    <property type="match status" value="1"/>
</dbReference>
<dbReference type="PROSITE" id="PS01071">
    <property type="entry name" value="GRPE"/>
    <property type="match status" value="1"/>
</dbReference>
<name>GRPE_RICFE</name>
<gene>
    <name evidence="1" type="primary">grpE</name>
    <name type="ordered locus">RF_0402</name>
</gene>
<proteinExistence type="inferred from homology"/>
<accession>Q4UJN5</accession>
<sequence>MIDDNIENNEQTINDIAEDIVETANPEITELKAEIEELKDKLIRTTAEIDNTRKRLEKARDEAKDYAIATFAKELLNVSDNLSRALAHKPANSDIEVTNIIAGVQMTKDELDKIFHKHHIEEIKPEIGSMFDYNLHNAISQIEHPDHAPNSIITLMQSGYKIRDRLLRPATVQVVKKSE</sequence>
<organism>
    <name type="scientific">Rickettsia felis (strain ATCC VR-1525 / URRWXCal2)</name>
    <name type="common">Rickettsia azadi</name>
    <dbReference type="NCBI Taxonomy" id="315456"/>
    <lineage>
        <taxon>Bacteria</taxon>
        <taxon>Pseudomonadati</taxon>
        <taxon>Pseudomonadota</taxon>
        <taxon>Alphaproteobacteria</taxon>
        <taxon>Rickettsiales</taxon>
        <taxon>Rickettsiaceae</taxon>
        <taxon>Rickettsieae</taxon>
        <taxon>Rickettsia</taxon>
        <taxon>spotted fever group</taxon>
    </lineage>
</organism>
<keyword id="KW-0143">Chaperone</keyword>
<keyword id="KW-0963">Cytoplasm</keyword>
<keyword id="KW-0346">Stress response</keyword>
<evidence type="ECO:0000255" key="1">
    <source>
        <dbReference type="HAMAP-Rule" id="MF_01151"/>
    </source>
</evidence>